<sequence length="162" mass="18291">MGLETEKADVQLFMDDDSYSHHSGLEYADPEKFADSDQDRDPHRLNSHLKLGFEDVIAEPVTTHSFDKVWICSHALFEISKYVMYKFLTVFLAIPLAFIAGILFATLSCLHIWILMPFVKTCLMVLPSVQTIWKSVTDVIIAPLCTSVGRCFSSVSLQLSQD</sequence>
<organism>
    <name type="scientific">Pan troglodytes</name>
    <name type="common">Chimpanzee</name>
    <dbReference type="NCBI Taxonomy" id="9598"/>
    <lineage>
        <taxon>Eukaryota</taxon>
        <taxon>Metazoa</taxon>
        <taxon>Chordata</taxon>
        <taxon>Craniata</taxon>
        <taxon>Vertebrata</taxon>
        <taxon>Euteleostomi</taxon>
        <taxon>Mammalia</taxon>
        <taxon>Eutheria</taxon>
        <taxon>Euarchontoglires</taxon>
        <taxon>Primates</taxon>
        <taxon>Haplorrhini</taxon>
        <taxon>Catarrhini</taxon>
        <taxon>Hominidae</taxon>
        <taxon>Pan</taxon>
    </lineage>
</organism>
<gene>
    <name type="primary">CAV2</name>
</gene>
<feature type="chain" id="PRO_0000226056" description="Caveolin-2">
    <location>
        <begin position="1"/>
        <end position="162"/>
    </location>
</feature>
<feature type="topological domain" description="Cytoplasmic" evidence="4">
    <location>
        <begin position="1"/>
        <end position="86"/>
    </location>
</feature>
<feature type="intramembrane region" description="Helical" evidence="4">
    <location>
        <begin position="87"/>
        <end position="107"/>
    </location>
</feature>
<feature type="topological domain" description="Cytoplasmic" evidence="4">
    <location>
        <begin position="108"/>
        <end position="162"/>
    </location>
</feature>
<feature type="modified residue" description="Phosphotyrosine; by SRC" evidence="2">
    <location>
        <position position="19"/>
    </location>
</feature>
<feature type="modified residue" description="Phosphoserine" evidence="3">
    <location>
        <position position="20"/>
    </location>
</feature>
<feature type="modified residue" description="Phosphoserine" evidence="2">
    <location>
        <position position="23"/>
    </location>
</feature>
<feature type="modified residue" description="Phosphotyrosine; by SRC" evidence="2">
    <location>
        <position position="27"/>
    </location>
</feature>
<feature type="modified residue" description="Phosphoserine" evidence="2">
    <location>
        <position position="36"/>
    </location>
</feature>
<keyword id="KW-1003">Cell membrane</keyword>
<keyword id="KW-0963">Cytoplasm</keyword>
<keyword id="KW-0333">Golgi apparatus</keyword>
<keyword id="KW-0472">Membrane</keyword>
<keyword id="KW-0539">Nucleus</keyword>
<keyword id="KW-0597">Phosphoprotein</keyword>
<keyword id="KW-1185">Reference proteome</keyword>
<dbReference type="EMBL" id="DP000016">
    <property type="protein sequence ID" value="AAR16245.1"/>
    <property type="molecule type" value="Genomic_DNA"/>
</dbReference>
<dbReference type="RefSeq" id="NP_001129298.1">
    <property type="nucleotide sequence ID" value="NM_001135826.1"/>
</dbReference>
<dbReference type="SMR" id="Q2QLF3"/>
<dbReference type="FunCoup" id="Q2QLF3">
    <property type="interactions" value="902"/>
</dbReference>
<dbReference type="STRING" id="9598.ENSPTRP00000060846"/>
<dbReference type="PaxDb" id="9598-ENSPTRP00000060846"/>
<dbReference type="Ensembl" id="ENSPTRT00000074155.2">
    <property type="protein sequence ID" value="ENSPTRP00000060846.1"/>
    <property type="gene ID" value="ENSPTRG00000040031.2"/>
</dbReference>
<dbReference type="GeneID" id="736452"/>
<dbReference type="KEGG" id="ptr:736452"/>
<dbReference type="CTD" id="858"/>
<dbReference type="VGNC" id="VGNC:4296">
    <property type="gene designation" value="CAV2"/>
</dbReference>
<dbReference type="eggNOG" id="ENOG502RZYX">
    <property type="taxonomic scope" value="Eukaryota"/>
</dbReference>
<dbReference type="GeneTree" id="ENSGT00950000183006"/>
<dbReference type="HOGENOM" id="CLU_102582_2_0_1"/>
<dbReference type="InParanoid" id="Q2QLF3"/>
<dbReference type="OMA" id="TRIFMDD"/>
<dbReference type="OrthoDB" id="3599at9604"/>
<dbReference type="TreeFam" id="TF315736"/>
<dbReference type="Proteomes" id="UP000002277">
    <property type="component" value="Chromosome 7"/>
</dbReference>
<dbReference type="Bgee" id="ENSPTRG00000040031">
    <property type="expression patterns" value="Expressed in lung and 21 other cell types or tissues"/>
</dbReference>
<dbReference type="GO" id="GO:0002080">
    <property type="term" value="C:acrosomal membrane"/>
    <property type="evidence" value="ECO:0007669"/>
    <property type="project" value="Ensembl"/>
</dbReference>
<dbReference type="GO" id="GO:0005901">
    <property type="term" value="C:caveola"/>
    <property type="evidence" value="ECO:0000250"/>
    <property type="project" value="UniProtKB"/>
</dbReference>
<dbReference type="GO" id="GO:0002095">
    <property type="term" value="C:caveolar macromolecular signaling complex"/>
    <property type="evidence" value="ECO:0007669"/>
    <property type="project" value="Ensembl"/>
</dbReference>
<dbReference type="GO" id="GO:0031410">
    <property type="term" value="C:cytoplasmic vesicle"/>
    <property type="evidence" value="ECO:0000318"/>
    <property type="project" value="GO_Central"/>
</dbReference>
<dbReference type="GO" id="GO:0005925">
    <property type="term" value="C:focal adhesion"/>
    <property type="evidence" value="ECO:0007669"/>
    <property type="project" value="Ensembl"/>
</dbReference>
<dbReference type="GO" id="GO:0005794">
    <property type="term" value="C:Golgi apparatus"/>
    <property type="evidence" value="ECO:0000318"/>
    <property type="project" value="GO_Central"/>
</dbReference>
<dbReference type="GO" id="GO:0000139">
    <property type="term" value="C:Golgi membrane"/>
    <property type="evidence" value="ECO:0007669"/>
    <property type="project" value="UniProtKB-SubCell"/>
</dbReference>
<dbReference type="GO" id="GO:0005634">
    <property type="term" value="C:nucleus"/>
    <property type="evidence" value="ECO:0007669"/>
    <property type="project" value="UniProtKB-SubCell"/>
</dbReference>
<dbReference type="GO" id="GO:0048471">
    <property type="term" value="C:perinuclear region of cytoplasm"/>
    <property type="evidence" value="ECO:0000250"/>
    <property type="project" value="UniProtKB"/>
</dbReference>
<dbReference type="GO" id="GO:0044853">
    <property type="term" value="C:plasma membrane raft"/>
    <property type="evidence" value="ECO:0000250"/>
    <property type="project" value="UniProtKB"/>
</dbReference>
<dbReference type="GO" id="GO:0030133">
    <property type="term" value="C:transport vesicle"/>
    <property type="evidence" value="ECO:0007669"/>
    <property type="project" value="Ensembl"/>
</dbReference>
<dbReference type="GO" id="GO:0031748">
    <property type="term" value="F:D1 dopamine receptor binding"/>
    <property type="evidence" value="ECO:0000250"/>
    <property type="project" value="UniProtKB"/>
</dbReference>
<dbReference type="GO" id="GO:0060090">
    <property type="term" value="F:molecular adaptor activity"/>
    <property type="evidence" value="ECO:0000318"/>
    <property type="project" value="GO_Central"/>
</dbReference>
<dbReference type="GO" id="GO:0046982">
    <property type="term" value="F:protein heterodimerization activity"/>
    <property type="evidence" value="ECO:0007669"/>
    <property type="project" value="Ensembl"/>
</dbReference>
<dbReference type="GO" id="GO:0042803">
    <property type="term" value="F:protein homodimerization activity"/>
    <property type="evidence" value="ECO:0007669"/>
    <property type="project" value="Ensembl"/>
</dbReference>
<dbReference type="GO" id="GO:0019901">
    <property type="term" value="F:protein kinase binding"/>
    <property type="evidence" value="ECO:0000318"/>
    <property type="project" value="GO_Central"/>
</dbReference>
<dbReference type="GO" id="GO:0030674">
    <property type="term" value="F:protein-macromolecule adaptor activity"/>
    <property type="evidence" value="ECO:0007669"/>
    <property type="project" value="Ensembl"/>
</dbReference>
<dbReference type="GO" id="GO:0097110">
    <property type="term" value="F:scaffold protein binding"/>
    <property type="evidence" value="ECO:0007669"/>
    <property type="project" value="Ensembl"/>
</dbReference>
<dbReference type="GO" id="GO:0071711">
    <property type="term" value="P:basement membrane organization"/>
    <property type="evidence" value="ECO:0007669"/>
    <property type="project" value="Ensembl"/>
</dbReference>
<dbReference type="GO" id="GO:0070836">
    <property type="term" value="P:caveola assembly"/>
    <property type="evidence" value="ECO:0000250"/>
    <property type="project" value="UniProtKB"/>
</dbReference>
<dbReference type="GO" id="GO:0030154">
    <property type="term" value="P:cell differentiation"/>
    <property type="evidence" value="ECO:0000318"/>
    <property type="project" value="GO_Central"/>
</dbReference>
<dbReference type="GO" id="GO:0007029">
    <property type="term" value="P:endoplasmic reticulum organization"/>
    <property type="evidence" value="ECO:0000250"/>
    <property type="project" value="UniProtKB"/>
</dbReference>
<dbReference type="GO" id="GO:0001935">
    <property type="term" value="P:endothelial cell proliferation"/>
    <property type="evidence" value="ECO:0007669"/>
    <property type="project" value="Ensembl"/>
</dbReference>
<dbReference type="GO" id="GO:0008286">
    <property type="term" value="P:insulin receptor signaling pathway"/>
    <property type="evidence" value="ECO:0000318"/>
    <property type="project" value="GO_Central"/>
</dbReference>
<dbReference type="GO" id="GO:0007005">
    <property type="term" value="P:mitochondrion organization"/>
    <property type="evidence" value="ECO:0000250"/>
    <property type="project" value="UniProtKB"/>
</dbReference>
<dbReference type="GO" id="GO:0001937">
    <property type="term" value="P:negative regulation of endothelial cell proliferation"/>
    <property type="evidence" value="ECO:0000250"/>
    <property type="project" value="UniProtKB"/>
</dbReference>
<dbReference type="GO" id="GO:0014859">
    <property type="term" value="P:negative regulation of skeletal muscle cell proliferation"/>
    <property type="evidence" value="ECO:0007669"/>
    <property type="project" value="Ensembl"/>
</dbReference>
<dbReference type="GO" id="GO:0030512">
    <property type="term" value="P:negative regulation of transforming growth factor beta receptor signaling pathway"/>
    <property type="evidence" value="ECO:0007669"/>
    <property type="project" value="Ensembl"/>
</dbReference>
<dbReference type="GO" id="GO:0044794">
    <property type="term" value="P:positive regulation by host of viral process"/>
    <property type="evidence" value="ECO:0007669"/>
    <property type="project" value="Ensembl"/>
</dbReference>
<dbReference type="GO" id="GO:0060161">
    <property type="term" value="P:positive regulation of dopamine receptor signaling pathway"/>
    <property type="evidence" value="ECO:0000250"/>
    <property type="project" value="UniProtKB"/>
</dbReference>
<dbReference type="GO" id="GO:0001938">
    <property type="term" value="P:positive regulation of endothelial cell proliferation"/>
    <property type="evidence" value="ECO:0007669"/>
    <property type="project" value="Ensembl"/>
</dbReference>
<dbReference type="GO" id="GO:0043410">
    <property type="term" value="P:positive regulation of MAPK cascade"/>
    <property type="evidence" value="ECO:0007669"/>
    <property type="project" value="Ensembl"/>
</dbReference>
<dbReference type="GO" id="GO:0019065">
    <property type="term" value="P:receptor-mediated endocytosis of virus by host cell"/>
    <property type="evidence" value="ECO:0007669"/>
    <property type="project" value="Ensembl"/>
</dbReference>
<dbReference type="GO" id="GO:0051480">
    <property type="term" value="P:regulation of cytosolic calcium ion concentration"/>
    <property type="evidence" value="ECO:0000318"/>
    <property type="project" value="GO_Central"/>
</dbReference>
<dbReference type="GO" id="GO:0007088">
    <property type="term" value="P:regulation of mitotic nuclear division"/>
    <property type="evidence" value="ECO:0007669"/>
    <property type="project" value="Ensembl"/>
</dbReference>
<dbReference type="GO" id="GO:0014856">
    <property type="term" value="P:skeletal muscle cell proliferation"/>
    <property type="evidence" value="ECO:0007669"/>
    <property type="project" value="Ensembl"/>
</dbReference>
<dbReference type="GO" id="GO:0048741">
    <property type="term" value="P:skeletal muscle fiber development"/>
    <property type="evidence" value="ECO:0000250"/>
    <property type="project" value="UniProtKB"/>
</dbReference>
<dbReference type="GO" id="GO:0007179">
    <property type="term" value="P:transforming growth factor beta receptor signaling pathway"/>
    <property type="evidence" value="ECO:0007669"/>
    <property type="project" value="Ensembl"/>
</dbReference>
<dbReference type="GO" id="GO:0048278">
    <property type="term" value="P:vesicle docking"/>
    <property type="evidence" value="ECO:0000250"/>
    <property type="project" value="UniProtKB"/>
</dbReference>
<dbReference type="GO" id="GO:0006906">
    <property type="term" value="P:vesicle fusion"/>
    <property type="evidence" value="ECO:0000250"/>
    <property type="project" value="UniProtKB"/>
</dbReference>
<dbReference type="GO" id="GO:0019076">
    <property type="term" value="P:viral release from host cell"/>
    <property type="evidence" value="ECO:0007669"/>
    <property type="project" value="Ensembl"/>
</dbReference>
<dbReference type="InterPro" id="IPR001612">
    <property type="entry name" value="Caveolin"/>
</dbReference>
<dbReference type="InterPro" id="IPR018361">
    <property type="entry name" value="Caveolin_CS"/>
</dbReference>
<dbReference type="PANTHER" id="PTHR10844">
    <property type="entry name" value="CAVEOLIN"/>
    <property type="match status" value="1"/>
</dbReference>
<dbReference type="PANTHER" id="PTHR10844:SF3">
    <property type="entry name" value="CAVEOLIN-2"/>
    <property type="match status" value="1"/>
</dbReference>
<dbReference type="Pfam" id="PF01146">
    <property type="entry name" value="Caveolin"/>
    <property type="match status" value="1"/>
</dbReference>
<dbReference type="PROSITE" id="PS01210">
    <property type="entry name" value="CAVEOLIN"/>
    <property type="match status" value="1"/>
</dbReference>
<proteinExistence type="inferred from homology"/>
<name>CAV2_PANTR</name>
<reference key="1">
    <citation type="journal article" date="2003" name="Nature">
        <title>Comparative analyses of multi-species sequences from targeted genomic regions.</title>
        <authorList>
            <person name="Thomas J.W."/>
            <person name="Touchman J.W."/>
            <person name="Blakesley R.W."/>
            <person name="Bouffard G.G."/>
            <person name="Beckstrom-Sternberg S.M."/>
            <person name="Margulies E.H."/>
            <person name="Blanchette M."/>
            <person name="Siepel A.C."/>
            <person name="Thomas P.J."/>
            <person name="McDowell J.C."/>
            <person name="Maskeri B."/>
            <person name="Hansen N.F."/>
            <person name="Schwartz M.S."/>
            <person name="Weber R.J."/>
            <person name="Kent W.J."/>
            <person name="Karolchik D."/>
            <person name="Bruen T.C."/>
            <person name="Bevan R."/>
            <person name="Cutler D.J."/>
            <person name="Schwartz S."/>
            <person name="Elnitski L."/>
            <person name="Idol J.R."/>
            <person name="Prasad A.B."/>
            <person name="Lee-Lin S.-Q."/>
            <person name="Maduro V.V.B."/>
            <person name="Summers T.J."/>
            <person name="Portnoy M.E."/>
            <person name="Dietrich N.L."/>
            <person name="Akhter N."/>
            <person name="Ayele K."/>
            <person name="Benjamin B."/>
            <person name="Cariaga K."/>
            <person name="Brinkley C.P."/>
            <person name="Brooks S.Y."/>
            <person name="Granite S."/>
            <person name="Guan X."/>
            <person name="Gupta J."/>
            <person name="Haghighi P."/>
            <person name="Ho S.-L."/>
            <person name="Huang M.C."/>
            <person name="Karlins E."/>
            <person name="Laric P.L."/>
            <person name="Legaspi R."/>
            <person name="Lim M.J."/>
            <person name="Maduro Q.L."/>
            <person name="Masiello C.A."/>
            <person name="Mastrian S.D."/>
            <person name="McCloskey J.C."/>
            <person name="Pearson R."/>
            <person name="Stantripop S."/>
            <person name="Tiongson E.E."/>
            <person name="Tran J.T."/>
            <person name="Tsurgeon C."/>
            <person name="Vogt J.L."/>
            <person name="Walker M.A."/>
            <person name="Wetherby K.D."/>
            <person name="Wiggins L.S."/>
            <person name="Young A.C."/>
            <person name="Zhang L.-H."/>
            <person name="Osoegawa K."/>
            <person name="Zhu B."/>
            <person name="Zhao B."/>
            <person name="Shu C.L."/>
            <person name="De Jong P.J."/>
            <person name="Lawrence C.E."/>
            <person name="Smit A.F."/>
            <person name="Chakravarti A."/>
            <person name="Haussler D."/>
            <person name="Green P."/>
            <person name="Miller W."/>
            <person name="Green E.D."/>
        </authorList>
    </citation>
    <scope>NUCLEOTIDE SEQUENCE [LARGE SCALE GENOMIC DNA]</scope>
</reference>
<protein>
    <recommendedName>
        <fullName>Caveolin-2</fullName>
    </recommendedName>
</protein>
<evidence type="ECO:0000250" key="1"/>
<evidence type="ECO:0000250" key="2">
    <source>
        <dbReference type="UniProtKB" id="P51636"/>
    </source>
</evidence>
<evidence type="ECO:0000250" key="3">
    <source>
        <dbReference type="UniProtKB" id="Q9WVC3"/>
    </source>
</evidence>
<evidence type="ECO:0000255" key="4"/>
<evidence type="ECO:0000305" key="5"/>
<accession>Q2QLF3</accession>
<comment type="function">
    <text evidence="1">May act as a scaffolding protein within caveolar membranes. Interacts directly with G-protein alpha subunits and can functionally regulate their activity. Acts as an accessory protein in conjunction with CAV1 in targeting to lipid rafts and driving caveolae formation. The Ser-36 phosphorylated form has a role in modulating mitosis in endothelial cells. Positive regulator of cellular mitogenesis of the MAPK signaling pathway. Required for the insulin-stimulated nuclear translocation and activation of MAPK1 and STAT3, and the subsequent regulation of cell cycle progression (By similarity).</text>
</comment>
<comment type="subunit">
    <text evidence="1">Monomer or homodimer (By similarity). Interacts with CAV1; the interaction forms a stable heterooligomeric complex that is required for targeting to lipid rafts and for caveolae formation. Tyrosine phosphorylated forms do not form heterooligomers with the Tyr-19-phosphorylated form existing as a monomer or dimer, and the Tyr-27-form as a monomer only. Interacts (tyrosine phosphorylated form) with the SH2 domain-containing proteins, RASA1, NCK1 and SRC. Interacts (tyrosine phosphorylated form) with INSR, the interaction (Tyr-27-phosphorylated form) is increased on insulin stimulation. Interacts (Tyr-19 phosphorylated form) with MAPK1 (phosphorylated form); the interaction, promoted by insulin, leads to nuclear location and MAPK1 activation. Interacts with STAT3; the interaction is increased on insulin-induced tyrosine phosphorylation leading to STAT activation (By similarity).</text>
</comment>
<comment type="subcellular location">
    <subcellularLocation>
        <location evidence="1">Nucleus</location>
    </subcellularLocation>
    <subcellularLocation>
        <location evidence="1">Cytoplasm</location>
    </subcellularLocation>
    <subcellularLocation>
        <location>Golgi apparatus membrane</location>
        <topology>Peripheral membrane protein</topology>
    </subcellularLocation>
    <subcellularLocation>
        <location>Cell membrane</location>
        <topology>Peripheral membrane protein</topology>
    </subcellularLocation>
    <subcellularLocation>
        <location>Membrane</location>
        <location>Caveola</location>
        <topology>Peripheral membrane protein</topology>
    </subcellularLocation>
    <text evidence="1">Potential hairpin-like structure in the membrane. Membrane protein of caveolae. Tyr-19-phosphorylated form is enriched at sites of cell-cell contact and is translocated to the nucleus in complex with MAPK1 in response to insulin (By similarity). Tyr-27-phosphorylated form is located both in the cytoplasm and plasma membrane. CAV1-mediated Ser-23-phosphorylated form locates to the plasma membrane. Ser-36-phosphorylated form resides in intracellular compartments.</text>
</comment>
<comment type="PTM">
    <text evidence="1">Phosphorylated on serine and tyrosine residues. CAV1 promotes phosphorylation on Ser-23 which then targets the complex to the plasma membrane, lipid rafts and caveolae. Phosphorylation on Ser-36 appears to modulate mitosis in endothelial cells (By similarity). Phosphorylation on both Tyr-19 and Tyr-27 is required for insulin-induced 'Ser-727' phosphorylation of STAT3 and its activation. Phosphorylation on Tyr-19 is required for insulin-induced phosphorylation of MAPK1 and DNA binding of STAT3. Tyrosine phosphorylation is induced by both EGF and insulin (By. similarity).</text>
</comment>
<comment type="similarity">
    <text evidence="5">Belongs to the caveolin family.</text>
</comment>